<organism>
    <name type="scientific">Crocus vernus</name>
    <name type="common">Dutch crocus</name>
    <dbReference type="NCBI Taxonomy" id="87752"/>
    <lineage>
        <taxon>Eukaryota</taxon>
        <taxon>Viridiplantae</taxon>
        <taxon>Streptophyta</taxon>
        <taxon>Embryophyta</taxon>
        <taxon>Tracheophyta</taxon>
        <taxon>Spermatophyta</taxon>
        <taxon>Magnoliopsida</taxon>
        <taxon>Liliopsida</taxon>
        <taxon>Asparagales</taxon>
        <taxon>Iridaceae</taxon>
        <taxon>Crocoideae</taxon>
        <taxon>Croceae</taxon>
        <taxon>Crocus</taxon>
    </lineage>
</organism>
<comment type="function">
    <text evidence="2">Mannose-specific lectin. Has weak agglutinating activity towards trypsin-treated erythrocytes from rabbit but not from human (By similarity).</text>
</comment>
<comment type="subunit">
    <text evidence="1">Heterotetramer of 2 domain 1 and 2 domain 2 chains arranged as a dimer of domain 1/domain 2 heterodimers.</text>
</comment>
<comment type="miscellaneous">
    <text>On the 2D-gel the determined pI of this protein is: 5.18, its MW is: 48 kDa.</text>
</comment>
<name>LEC3_CROVR</name>
<dbReference type="PDB" id="3MEZ">
    <property type="method" value="X-ray"/>
    <property type="resolution" value="1.94 A"/>
    <property type="chains" value="A/C=1-110, B/D=112-223"/>
</dbReference>
<dbReference type="PDBsum" id="3MEZ"/>
<dbReference type="SMR" id="P86626"/>
<dbReference type="UniLectin" id="P86626"/>
<dbReference type="EvolutionaryTrace" id="P86626"/>
<dbReference type="GO" id="GO:0005537">
    <property type="term" value="F:D-mannose binding"/>
    <property type="evidence" value="ECO:0007669"/>
    <property type="project" value="UniProtKB-KW"/>
</dbReference>
<dbReference type="GO" id="GO:0051707">
    <property type="term" value="P:response to other organism"/>
    <property type="evidence" value="ECO:0007669"/>
    <property type="project" value="UniProtKB-ARBA"/>
</dbReference>
<dbReference type="Gene3D" id="2.90.10.10">
    <property type="entry name" value="Bulb-type lectin domain"/>
    <property type="match status" value="2"/>
</dbReference>
<dbReference type="InterPro" id="IPR001480">
    <property type="entry name" value="Bulb-type_lectin_dom"/>
</dbReference>
<dbReference type="InterPro" id="IPR036426">
    <property type="entry name" value="Bulb-type_lectin_dom_sf"/>
</dbReference>
<dbReference type="SMART" id="SM00108">
    <property type="entry name" value="B_lectin"/>
    <property type="match status" value="2"/>
</dbReference>
<dbReference type="SUPFAM" id="SSF51110">
    <property type="entry name" value="alpha-D-mannose-specific plant lectins"/>
    <property type="match status" value="2"/>
</dbReference>
<dbReference type="PROSITE" id="PS50927">
    <property type="entry name" value="BULB_LECTIN"/>
    <property type="match status" value="2"/>
</dbReference>
<reference evidence="5" key="1">
    <citation type="submission" date="2010-05" db="UniProtKB">
        <authorList>
            <person name="Akrem A."/>
            <person name="Meyer A."/>
            <person name="Perbandt M."/>
            <person name="Voelter W."/>
            <person name="Buck F."/>
            <person name="Betzel C."/>
        </authorList>
    </citation>
    <scope>X-RAY CRYSTALLOGRAPHY (1.94 ANGSTROMS)</scope>
    <scope>DISULFIDE BONDS</scope>
    <source>
        <tissue>Corm</tissue>
    </source>
</reference>
<keyword id="KW-0002">3D-structure</keyword>
<keyword id="KW-1015">Disulfide bond</keyword>
<keyword id="KW-0348">Hemagglutinin</keyword>
<keyword id="KW-0430">Lectin</keyword>
<keyword id="KW-0465">Mannose-binding</keyword>
<keyword id="KW-0677">Repeat</keyword>
<evidence type="ECO:0000250" key="1"/>
<evidence type="ECO:0000250" key="2">
    <source>
        <dbReference type="UniProtKB" id="Q9FVA1"/>
    </source>
</evidence>
<evidence type="ECO:0000255" key="3">
    <source>
        <dbReference type="PROSITE-ProRule" id="PRU00038"/>
    </source>
</evidence>
<evidence type="ECO:0000269" key="4">
    <source ref="1"/>
</evidence>
<evidence type="ECO:0000305" key="5"/>
<evidence type="ECO:0007829" key="6">
    <source>
        <dbReference type="PDB" id="3MEZ"/>
    </source>
</evidence>
<sequence length="224" mass="24454">DNNVLLTGDVIHTDNQLSYESAAFVMQGDCNLVLYNEAGGFQSNTHGRGVDCTLRLNNRGQLEIHSANSNTPVWVYPRSVNTVRGNYAATLGPDQHVTIYGPAIWSTPAAANIPRVRNVLFSSQVMYDNAQLATRDYSLVMRDDCNLVLTKGSKTNIVWESGTSGRGQHCFMRLGHSGELDITDDRLNTVFVSNTVGQEGDYVLILQINGQAVVYGPAVWSTAA</sequence>
<accession>P86626</accession>
<feature type="chain" id="PRO_0000395438" description="Mannose-specific lectin 3 chain 1">
    <location>
        <begin position="1"/>
        <end position="111"/>
    </location>
</feature>
<feature type="chain" id="PRO_0000395439" description="Mannose-specific lectin 3 chain 2">
    <location>
        <begin position="112"/>
        <end position="224"/>
    </location>
</feature>
<feature type="domain" description="Bulb-type lectin 1" evidence="3 5">
    <location>
        <begin position="2"/>
        <end position="111"/>
    </location>
</feature>
<feature type="domain" description="Bulb-type lectin 2" evidence="3">
    <location>
        <begin position="117"/>
        <end position="222"/>
    </location>
</feature>
<feature type="disulfide bond" evidence="3 4">
    <location>
        <begin position="30"/>
        <end position="52"/>
    </location>
</feature>
<feature type="disulfide bond" evidence="3 4">
    <location>
        <begin position="145"/>
        <end position="170"/>
    </location>
</feature>
<feature type="strand" evidence="6">
    <location>
        <begin position="4"/>
        <end position="6"/>
    </location>
</feature>
<feature type="strand" evidence="6">
    <location>
        <begin position="16"/>
        <end position="19"/>
    </location>
</feature>
<feature type="strand" evidence="6">
    <location>
        <begin position="22"/>
        <end position="26"/>
    </location>
</feature>
<feature type="strand" evidence="6">
    <location>
        <begin position="32"/>
        <end position="35"/>
    </location>
</feature>
<feature type="strand" evidence="6">
    <location>
        <begin position="53"/>
        <end position="56"/>
    </location>
</feature>
<feature type="strand" evidence="6">
    <location>
        <begin position="62"/>
        <end position="65"/>
    </location>
</feature>
<feature type="strand" evidence="6">
    <location>
        <begin position="73"/>
        <end position="79"/>
    </location>
</feature>
<feature type="strand" evidence="6">
    <location>
        <begin position="88"/>
        <end position="91"/>
    </location>
</feature>
<feature type="strand" evidence="6">
    <location>
        <begin position="97"/>
        <end position="100"/>
    </location>
</feature>
<feature type="strand" evidence="6">
    <location>
        <begin position="102"/>
        <end position="106"/>
    </location>
</feature>
<feature type="strand" evidence="6">
    <location>
        <begin position="117"/>
        <end position="121"/>
    </location>
</feature>
<feature type="strand" evidence="6">
    <location>
        <begin position="125"/>
        <end position="127"/>
    </location>
</feature>
<feature type="strand" evidence="6">
    <location>
        <begin position="131"/>
        <end position="134"/>
    </location>
</feature>
<feature type="strand" evidence="6">
    <location>
        <begin position="137"/>
        <end position="141"/>
    </location>
</feature>
<feature type="strand" evidence="6">
    <location>
        <begin position="147"/>
        <end position="151"/>
    </location>
</feature>
<feature type="turn" evidence="6">
    <location>
        <begin position="152"/>
        <end position="155"/>
    </location>
</feature>
<feature type="strand" evidence="6">
    <location>
        <begin position="156"/>
        <end position="160"/>
    </location>
</feature>
<feature type="strand" evidence="6">
    <location>
        <begin position="171"/>
        <end position="174"/>
    </location>
</feature>
<feature type="strand" evidence="6">
    <location>
        <begin position="180"/>
        <end position="183"/>
    </location>
</feature>
<feature type="strand" evidence="6">
    <location>
        <begin position="189"/>
        <end position="192"/>
    </location>
</feature>
<feature type="strand" evidence="6">
    <location>
        <begin position="198"/>
        <end position="200"/>
    </location>
</feature>
<feature type="strand" evidence="6">
    <location>
        <begin position="203"/>
        <end position="206"/>
    </location>
</feature>
<feature type="strand" evidence="6">
    <location>
        <begin position="212"/>
        <end position="215"/>
    </location>
</feature>
<feature type="strand" evidence="6">
    <location>
        <begin position="217"/>
        <end position="222"/>
    </location>
</feature>
<proteinExistence type="evidence at protein level"/>
<protein>
    <recommendedName>
        <fullName>Mannose-specific lectin 3</fullName>
    </recommendedName>
    <component>
        <recommendedName>
            <fullName>Mannose-specific lectin 3 chain 1</fullName>
        </recommendedName>
    </component>
    <component>
        <recommendedName>
            <fullName>Mannose-specific lectin 3 chain 2</fullName>
        </recommendedName>
    </component>
</protein>